<name>YIDD_BORA1</name>
<gene>
    <name type="ordered locus">BAV3415</name>
</gene>
<sequence>MIKTLLIAPIRFYRFFLSPWIGRQCRFTPSCSAYAIEAIERHGALRGLWLASRRIGRCHPWSPGGLDPVPDPARPQQKNQGSGCCGNHSRTGLD</sequence>
<reference key="1">
    <citation type="journal article" date="2006" name="J. Bacteriol.">
        <title>Comparison of the genome sequence of the poultry pathogen Bordetella avium with those of B. bronchiseptica, B. pertussis, and B. parapertussis reveals extensive diversity in surface structures associated with host interaction.</title>
        <authorList>
            <person name="Sebaihia M."/>
            <person name="Preston A."/>
            <person name="Maskell D.J."/>
            <person name="Kuzmiak H."/>
            <person name="Connell T.D."/>
            <person name="King N.D."/>
            <person name="Orndorff P.E."/>
            <person name="Miyamoto D.M."/>
            <person name="Thomson N.R."/>
            <person name="Harris D."/>
            <person name="Goble A."/>
            <person name="Lord A."/>
            <person name="Murphy L."/>
            <person name="Quail M.A."/>
            <person name="Rutter S."/>
            <person name="Squares R."/>
            <person name="Squares S."/>
            <person name="Woodward J."/>
            <person name="Parkhill J."/>
            <person name="Temple L.M."/>
        </authorList>
    </citation>
    <scope>NUCLEOTIDE SEQUENCE [LARGE SCALE GENOMIC DNA]</scope>
    <source>
        <strain>197N</strain>
    </source>
</reference>
<feature type="chain" id="PRO_0000253083" description="Putative membrane protein insertion efficiency factor">
    <location>
        <begin position="1"/>
        <end position="94"/>
    </location>
</feature>
<feature type="region of interest" description="Disordered" evidence="2">
    <location>
        <begin position="61"/>
        <end position="94"/>
    </location>
</feature>
<proteinExistence type="inferred from homology"/>
<protein>
    <recommendedName>
        <fullName evidence="1">Putative membrane protein insertion efficiency factor</fullName>
    </recommendedName>
</protein>
<evidence type="ECO:0000255" key="1">
    <source>
        <dbReference type="HAMAP-Rule" id="MF_00386"/>
    </source>
</evidence>
<evidence type="ECO:0000256" key="2">
    <source>
        <dbReference type="SAM" id="MobiDB-lite"/>
    </source>
</evidence>
<organism>
    <name type="scientific">Bordetella avium (strain 197N)</name>
    <dbReference type="NCBI Taxonomy" id="360910"/>
    <lineage>
        <taxon>Bacteria</taxon>
        <taxon>Pseudomonadati</taxon>
        <taxon>Pseudomonadota</taxon>
        <taxon>Betaproteobacteria</taxon>
        <taxon>Burkholderiales</taxon>
        <taxon>Alcaligenaceae</taxon>
        <taxon>Bordetella</taxon>
    </lineage>
</organism>
<dbReference type="EMBL" id="AM167904">
    <property type="protein sequence ID" value="CAJ51025.1"/>
    <property type="molecule type" value="Genomic_DNA"/>
</dbReference>
<dbReference type="RefSeq" id="WP_012419051.1">
    <property type="nucleotide sequence ID" value="NC_010645.1"/>
</dbReference>
<dbReference type="STRING" id="360910.BAV3415"/>
<dbReference type="GeneID" id="92936770"/>
<dbReference type="KEGG" id="bav:BAV3415"/>
<dbReference type="eggNOG" id="COG0759">
    <property type="taxonomic scope" value="Bacteria"/>
</dbReference>
<dbReference type="HOGENOM" id="CLU_144811_2_2_4"/>
<dbReference type="OrthoDB" id="9801753at2"/>
<dbReference type="Proteomes" id="UP000001977">
    <property type="component" value="Chromosome"/>
</dbReference>
<dbReference type="GO" id="GO:0005886">
    <property type="term" value="C:plasma membrane"/>
    <property type="evidence" value="ECO:0007669"/>
    <property type="project" value="UniProtKB-SubCell"/>
</dbReference>
<dbReference type="HAMAP" id="MF_00386">
    <property type="entry name" value="UPF0161_YidD"/>
    <property type="match status" value="1"/>
</dbReference>
<dbReference type="InterPro" id="IPR002696">
    <property type="entry name" value="Membr_insert_effic_factor_YidD"/>
</dbReference>
<dbReference type="NCBIfam" id="TIGR00278">
    <property type="entry name" value="membrane protein insertion efficiency factor YidD"/>
    <property type="match status" value="1"/>
</dbReference>
<dbReference type="PANTHER" id="PTHR33383">
    <property type="entry name" value="MEMBRANE PROTEIN INSERTION EFFICIENCY FACTOR-RELATED"/>
    <property type="match status" value="1"/>
</dbReference>
<dbReference type="PANTHER" id="PTHR33383:SF1">
    <property type="entry name" value="MEMBRANE PROTEIN INSERTION EFFICIENCY FACTOR-RELATED"/>
    <property type="match status" value="1"/>
</dbReference>
<dbReference type="Pfam" id="PF01809">
    <property type="entry name" value="YidD"/>
    <property type="match status" value="1"/>
</dbReference>
<dbReference type="SMART" id="SM01234">
    <property type="entry name" value="Haemolytic"/>
    <property type="match status" value="1"/>
</dbReference>
<keyword id="KW-0997">Cell inner membrane</keyword>
<keyword id="KW-1003">Cell membrane</keyword>
<keyword id="KW-0472">Membrane</keyword>
<keyword id="KW-1185">Reference proteome</keyword>
<accession>Q2KTI6</accession>
<comment type="function">
    <text evidence="1">Could be involved in insertion of integral membrane proteins into the membrane.</text>
</comment>
<comment type="subcellular location">
    <subcellularLocation>
        <location evidence="1">Cell inner membrane</location>
        <topology evidence="1">Peripheral membrane protein</topology>
        <orientation evidence="1">Cytoplasmic side</orientation>
    </subcellularLocation>
</comment>
<comment type="similarity">
    <text evidence="1">Belongs to the UPF0161 family.</text>
</comment>